<organism>
    <name type="scientific">Homo sapiens</name>
    <name type="common">Human</name>
    <dbReference type="NCBI Taxonomy" id="9606"/>
    <lineage>
        <taxon>Eukaryota</taxon>
        <taxon>Metazoa</taxon>
        <taxon>Chordata</taxon>
        <taxon>Craniata</taxon>
        <taxon>Vertebrata</taxon>
        <taxon>Euteleostomi</taxon>
        <taxon>Mammalia</taxon>
        <taxon>Eutheria</taxon>
        <taxon>Euarchontoglires</taxon>
        <taxon>Primates</taxon>
        <taxon>Haplorrhini</taxon>
        <taxon>Catarrhini</taxon>
        <taxon>Hominidae</taxon>
        <taxon>Homo</taxon>
    </lineage>
</organism>
<keyword id="KW-0025">Alternative splicing</keyword>
<keyword id="KW-0083">Bardet-Biedl syndrome</keyword>
<keyword id="KW-0966">Cell projection</keyword>
<keyword id="KW-1186">Ciliopathy</keyword>
<keyword id="KW-0969">Cilium</keyword>
<keyword id="KW-0970">Cilium biogenesis/degradation</keyword>
<keyword id="KW-0963">Cytoplasm</keyword>
<keyword id="KW-0206">Cytoskeleton</keyword>
<keyword id="KW-0225">Disease variant</keyword>
<keyword id="KW-0991">Intellectual disability</keyword>
<keyword id="KW-0979">Joubert syndrome</keyword>
<keyword id="KW-0981">Meckel syndrome</keyword>
<keyword id="KW-0550">Obesity</keyword>
<keyword id="KW-1267">Proteomics identification</keyword>
<keyword id="KW-1185">Reference proteome</keyword>
<protein>
    <recommendedName>
        <fullName evidence="15">Tectonic-like complex member MKS1</fullName>
    </recommendedName>
    <alternativeName>
        <fullName>Meckel syndrome type 1 protein</fullName>
    </alternativeName>
</protein>
<name>MKS1_HUMAN</name>
<proteinExistence type="evidence at protein level"/>
<dbReference type="EMBL" id="DQ185029">
    <property type="protein sequence ID" value="AAZ94714.1"/>
    <property type="molecule type" value="mRNA"/>
</dbReference>
<dbReference type="EMBL" id="AK000352">
    <property type="protein sequence ID" value="BAA91105.1"/>
    <property type="status" value="ALT_INIT"/>
    <property type="molecule type" value="mRNA"/>
</dbReference>
<dbReference type="EMBL" id="AK310815">
    <property type="status" value="NOT_ANNOTATED_CDS"/>
    <property type="molecule type" value="mRNA"/>
</dbReference>
<dbReference type="EMBL" id="AC005962">
    <property type="status" value="NOT_ANNOTATED_CDS"/>
    <property type="molecule type" value="Genomic_DNA"/>
</dbReference>
<dbReference type="EMBL" id="BC010061">
    <property type="protein sequence ID" value="AAH10061.1"/>
    <property type="status" value="ALT_INIT"/>
    <property type="molecule type" value="mRNA"/>
</dbReference>
<dbReference type="EMBL" id="CR457229">
    <property type="protein sequence ID" value="CAG33510.1"/>
    <property type="molecule type" value="mRNA"/>
</dbReference>
<dbReference type="CCDS" id="CCDS11603.2">
    <molecule id="Q9NXB0-1"/>
</dbReference>
<dbReference type="RefSeq" id="NP_001159399.1">
    <property type="nucleotide sequence ID" value="NM_001165927.1"/>
</dbReference>
<dbReference type="RefSeq" id="NP_001308197.1">
    <property type="nucleotide sequence ID" value="NM_001321268.1"/>
</dbReference>
<dbReference type="RefSeq" id="NP_001308198.1">
    <property type="nucleotide sequence ID" value="NM_001321269.1"/>
</dbReference>
<dbReference type="RefSeq" id="NP_060247.2">
    <molecule id="Q9NXB0-1"/>
    <property type="nucleotide sequence ID" value="NM_017777.4"/>
</dbReference>
<dbReference type="RefSeq" id="XP_016880294.1">
    <property type="nucleotide sequence ID" value="XM_017024805.1"/>
</dbReference>
<dbReference type="BioGRID" id="120249">
    <property type="interactions" value="130"/>
</dbReference>
<dbReference type="ComplexPortal" id="CPX-2531">
    <property type="entry name" value="MKS transition zone complex"/>
</dbReference>
<dbReference type="CORUM" id="Q9NXB0"/>
<dbReference type="DIP" id="DIP-56251N"/>
<dbReference type="FunCoup" id="Q9NXB0">
    <property type="interactions" value="934"/>
</dbReference>
<dbReference type="IntAct" id="Q9NXB0">
    <property type="interactions" value="93"/>
</dbReference>
<dbReference type="STRING" id="9606.ENSP00000376827"/>
<dbReference type="TCDB" id="8.A.170.1.1">
    <property type="family name" value="the b9-domain protein complex diffusion barrier for ciliary membrane proteins (cb9db) family"/>
</dbReference>
<dbReference type="GlyGen" id="Q9NXB0">
    <property type="glycosylation" value="2 sites"/>
</dbReference>
<dbReference type="iPTMnet" id="Q9NXB0"/>
<dbReference type="PhosphoSitePlus" id="Q9NXB0"/>
<dbReference type="BioMuta" id="MKS1"/>
<dbReference type="DMDM" id="92087008"/>
<dbReference type="jPOST" id="Q9NXB0"/>
<dbReference type="MassIVE" id="Q9NXB0"/>
<dbReference type="PaxDb" id="9606-ENSP00000376827"/>
<dbReference type="PeptideAtlas" id="Q9NXB0"/>
<dbReference type="ProteomicsDB" id="27713"/>
<dbReference type="ProteomicsDB" id="83068">
    <molecule id="Q9NXB0-1"/>
</dbReference>
<dbReference type="ProteomicsDB" id="83069">
    <molecule id="Q9NXB0-2"/>
</dbReference>
<dbReference type="Pumba" id="Q9NXB0"/>
<dbReference type="Antibodypedia" id="18351">
    <property type="antibodies" value="101 antibodies from 20 providers"/>
</dbReference>
<dbReference type="DNASU" id="54903"/>
<dbReference type="Ensembl" id="ENST00000393119.7">
    <molecule id="Q9NXB0-1"/>
    <property type="protein sequence ID" value="ENSP00000376827.2"/>
    <property type="gene ID" value="ENSG00000011143.19"/>
</dbReference>
<dbReference type="GeneID" id="54903"/>
<dbReference type="KEGG" id="hsa:54903"/>
<dbReference type="MANE-Select" id="ENST00000393119.7">
    <property type="protein sequence ID" value="ENSP00000376827.2"/>
    <property type="RefSeq nucleotide sequence ID" value="NM_017777.4"/>
    <property type="RefSeq protein sequence ID" value="NP_060247.2"/>
</dbReference>
<dbReference type="UCSC" id="uc002ivr.3">
    <molecule id="Q9NXB0-1"/>
    <property type="organism name" value="human"/>
</dbReference>
<dbReference type="AGR" id="HGNC:7121"/>
<dbReference type="CTD" id="54903"/>
<dbReference type="DisGeNET" id="54903"/>
<dbReference type="GeneCards" id="MKS1"/>
<dbReference type="GeneReviews" id="MKS1"/>
<dbReference type="HGNC" id="HGNC:7121">
    <property type="gene designation" value="MKS1"/>
</dbReference>
<dbReference type="HPA" id="ENSG00000011143">
    <property type="expression patterns" value="Low tissue specificity"/>
</dbReference>
<dbReference type="MalaCards" id="MKS1"/>
<dbReference type="MIM" id="249000">
    <property type="type" value="phenotype"/>
</dbReference>
<dbReference type="MIM" id="609883">
    <property type="type" value="gene"/>
</dbReference>
<dbReference type="MIM" id="615990">
    <property type="type" value="phenotype"/>
</dbReference>
<dbReference type="MIM" id="617121">
    <property type="type" value="phenotype"/>
</dbReference>
<dbReference type="neXtProt" id="NX_Q9NXB0"/>
<dbReference type="OpenTargets" id="ENSG00000011143"/>
<dbReference type="Orphanet" id="110">
    <property type="disease" value="Bardet-Biedl syndrome"/>
</dbReference>
<dbReference type="Orphanet" id="475">
    <property type="disease" value="Joubert syndrome"/>
</dbReference>
<dbReference type="Orphanet" id="220493">
    <property type="disease" value="Joubert syndrome with ocular defect"/>
</dbReference>
<dbReference type="Orphanet" id="564">
    <property type="disease" value="Meckel syndrome"/>
</dbReference>
<dbReference type="PharmGKB" id="PA30840"/>
<dbReference type="VEuPathDB" id="HostDB:ENSG00000011143"/>
<dbReference type="eggNOG" id="KOG4446">
    <property type="taxonomic scope" value="Eukaryota"/>
</dbReference>
<dbReference type="GeneTree" id="ENSGT00510000047471"/>
<dbReference type="HOGENOM" id="CLU_026711_0_1_1"/>
<dbReference type="InParanoid" id="Q9NXB0"/>
<dbReference type="OMA" id="FTYVDHD"/>
<dbReference type="OrthoDB" id="10263520at2759"/>
<dbReference type="PAN-GO" id="Q9NXB0">
    <property type="GO annotations" value="2 GO annotations based on evolutionary models"/>
</dbReference>
<dbReference type="PhylomeDB" id="Q9NXB0"/>
<dbReference type="TreeFam" id="TF323812"/>
<dbReference type="PathwayCommons" id="Q9NXB0"/>
<dbReference type="Reactome" id="R-HSA-5610787">
    <property type="pathway name" value="Hedgehog 'off' state"/>
</dbReference>
<dbReference type="Reactome" id="R-HSA-5620912">
    <property type="pathway name" value="Anchoring of the basal body to the plasma membrane"/>
</dbReference>
<dbReference type="SignaLink" id="Q9NXB0"/>
<dbReference type="BioGRID-ORCS" id="54903">
    <property type="hits" value="16 hits in 1151 CRISPR screens"/>
</dbReference>
<dbReference type="ChiTaRS" id="MKS1">
    <property type="organism name" value="human"/>
</dbReference>
<dbReference type="GeneWiki" id="MKS1"/>
<dbReference type="GenomeRNAi" id="54903"/>
<dbReference type="Pharos" id="Q9NXB0">
    <property type="development level" value="Tbio"/>
</dbReference>
<dbReference type="PRO" id="PR:Q9NXB0"/>
<dbReference type="Proteomes" id="UP000005640">
    <property type="component" value="Chromosome 17"/>
</dbReference>
<dbReference type="RNAct" id="Q9NXB0">
    <property type="molecule type" value="protein"/>
</dbReference>
<dbReference type="Bgee" id="ENSG00000011143">
    <property type="expression patterns" value="Expressed in right uterine tube and 110 other cell types or tissues"/>
</dbReference>
<dbReference type="ExpressionAtlas" id="Q9NXB0">
    <property type="expression patterns" value="baseline and differential"/>
</dbReference>
<dbReference type="GO" id="GO:0005814">
    <property type="term" value="C:centriole"/>
    <property type="evidence" value="ECO:0007669"/>
    <property type="project" value="Ensembl"/>
</dbReference>
<dbReference type="GO" id="GO:0005813">
    <property type="term" value="C:centrosome"/>
    <property type="evidence" value="ECO:0000314"/>
    <property type="project" value="UniProtKB"/>
</dbReference>
<dbReference type="GO" id="GO:0036064">
    <property type="term" value="C:ciliary basal body"/>
    <property type="evidence" value="ECO:0000314"/>
    <property type="project" value="HPA"/>
</dbReference>
<dbReference type="GO" id="GO:0005737">
    <property type="term" value="C:cytoplasm"/>
    <property type="evidence" value="ECO:0000314"/>
    <property type="project" value="UniProtKB"/>
</dbReference>
<dbReference type="GO" id="GO:0005829">
    <property type="term" value="C:cytosol"/>
    <property type="evidence" value="ECO:0000304"/>
    <property type="project" value="Reactome"/>
</dbReference>
<dbReference type="GO" id="GO:0016020">
    <property type="term" value="C:membrane"/>
    <property type="evidence" value="ECO:0007669"/>
    <property type="project" value="Ensembl"/>
</dbReference>
<dbReference type="GO" id="GO:0036038">
    <property type="term" value="C:MKS complex"/>
    <property type="evidence" value="ECO:0000250"/>
    <property type="project" value="UniProtKB"/>
</dbReference>
<dbReference type="GO" id="GO:0005730">
    <property type="term" value="C:nucleolus"/>
    <property type="evidence" value="ECO:0000314"/>
    <property type="project" value="HPA"/>
</dbReference>
<dbReference type="GO" id="GO:0005654">
    <property type="term" value="C:nucleoplasm"/>
    <property type="evidence" value="ECO:0000314"/>
    <property type="project" value="HPA"/>
</dbReference>
<dbReference type="GO" id="GO:0048754">
    <property type="term" value="P:branching morphogenesis of an epithelial tube"/>
    <property type="evidence" value="ECO:0007669"/>
    <property type="project" value="Ensembl"/>
</dbReference>
<dbReference type="GO" id="GO:0060411">
    <property type="term" value="P:cardiac septum morphogenesis"/>
    <property type="evidence" value="ECO:0007669"/>
    <property type="project" value="Ensembl"/>
</dbReference>
<dbReference type="GO" id="GO:0060271">
    <property type="term" value="P:cilium assembly"/>
    <property type="evidence" value="ECO:0000315"/>
    <property type="project" value="UniProtKB"/>
</dbReference>
<dbReference type="GO" id="GO:0061009">
    <property type="term" value="P:common bile duct development"/>
    <property type="evidence" value="ECO:0007669"/>
    <property type="project" value="Ensembl"/>
</dbReference>
<dbReference type="GO" id="GO:0007368">
    <property type="term" value="P:determination of left/right symmetry"/>
    <property type="evidence" value="ECO:0007669"/>
    <property type="project" value="Ensembl"/>
</dbReference>
<dbReference type="GO" id="GO:1990403">
    <property type="term" value="P:embryonic brain development"/>
    <property type="evidence" value="ECO:0007669"/>
    <property type="project" value="Ensembl"/>
</dbReference>
<dbReference type="GO" id="GO:0042733">
    <property type="term" value="P:embryonic digit morphogenesis"/>
    <property type="evidence" value="ECO:0007669"/>
    <property type="project" value="Ensembl"/>
</dbReference>
<dbReference type="GO" id="GO:0048706">
    <property type="term" value="P:embryonic skeletal system development"/>
    <property type="evidence" value="ECO:0007669"/>
    <property type="project" value="Ensembl"/>
</dbReference>
<dbReference type="GO" id="GO:0010669">
    <property type="term" value="P:epithelial structure maintenance"/>
    <property type="evidence" value="ECO:0007669"/>
    <property type="project" value="Ensembl"/>
</dbReference>
<dbReference type="GO" id="GO:0060322">
    <property type="term" value="P:head development"/>
    <property type="evidence" value="ECO:0007669"/>
    <property type="project" value="Ensembl"/>
</dbReference>
<dbReference type="GO" id="GO:0060122">
    <property type="term" value="P:inner ear receptor cell stereocilium organization"/>
    <property type="evidence" value="ECO:0007669"/>
    <property type="project" value="Ensembl"/>
</dbReference>
<dbReference type="GO" id="GO:0044458">
    <property type="term" value="P:motile cilium assembly"/>
    <property type="evidence" value="ECO:0007669"/>
    <property type="project" value="Ensembl"/>
</dbReference>
<dbReference type="GO" id="GO:0001843">
    <property type="term" value="P:neural tube closure"/>
    <property type="evidence" value="ECO:0007669"/>
    <property type="project" value="Ensembl"/>
</dbReference>
<dbReference type="GO" id="GO:1905515">
    <property type="term" value="P:non-motile cilium assembly"/>
    <property type="evidence" value="ECO:0007669"/>
    <property type="project" value="Ensembl"/>
</dbReference>
<dbReference type="GO" id="GO:0060828">
    <property type="term" value="P:regulation of canonical Wnt signaling pathway"/>
    <property type="evidence" value="ECO:0007669"/>
    <property type="project" value="Ensembl"/>
</dbReference>
<dbReference type="GO" id="GO:0008589">
    <property type="term" value="P:regulation of smoothened signaling pathway"/>
    <property type="evidence" value="ECO:0007669"/>
    <property type="project" value="Ensembl"/>
</dbReference>
<dbReference type="GO" id="GO:2000095">
    <property type="term" value="P:regulation of Wnt signaling pathway, planar cell polarity pathway"/>
    <property type="evidence" value="ECO:0007669"/>
    <property type="project" value="Ensembl"/>
</dbReference>
<dbReference type="GO" id="GO:0003271">
    <property type="term" value="P:smoothened signaling pathway involved in regulation of secondary heart field cardioblast proliferation"/>
    <property type="evidence" value="ECO:0007669"/>
    <property type="project" value="Ensembl"/>
</dbReference>
<dbReference type="InterPro" id="IPR010796">
    <property type="entry name" value="C2_B9-type_dom"/>
</dbReference>
<dbReference type="PANTHER" id="PTHR12968">
    <property type="entry name" value="B9 DOMAIN-CONTAINING"/>
    <property type="match status" value="1"/>
</dbReference>
<dbReference type="PANTHER" id="PTHR12968:SF4">
    <property type="entry name" value="TECTONIC-LIKE COMPLEX MEMBER MKS1"/>
    <property type="match status" value="1"/>
</dbReference>
<dbReference type="Pfam" id="PF07162">
    <property type="entry name" value="B9-C2"/>
    <property type="match status" value="1"/>
</dbReference>
<dbReference type="PROSITE" id="PS51381">
    <property type="entry name" value="C2_B9"/>
    <property type="match status" value="1"/>
</dbReference>
<evidence type="ECO:0000250" key="1">
    <source>
        <dbReference type="UniProtKB" id="Q5SW45"/>
    </source>
</evidence>
<evidence type="ECO:0000255" key="2">
    <source>
        <dbReference type="PROSITE-ProRule" id="PRU00713"/>
    </source>
</evidence>
<evidence type="ECO:0000269" key="3">
    <source>
    </source>
</evidence>
<evidence type="ECO:0000269" key="4">
    <source>
    </source>
</evidence>
<evidence type="ECO:0000269" key="5">
    <source>
    </source>
</evidence>
<evidence type="ECO:0000269" key="6">
    <source>
    </source>
</evidence>
<evidence type="ECO:0000269" key="7">
    <source>
    </source>
</evidence>
<evidence type="ECO:0000269" key="8">
    <source>
    </source>
</evidence>
<evidence type="ECO:0000269" key="9">
    <source>
    </source>
</evidence>
<evidence type="ECO:0000269" key="10">
    <source>
    </source>
</evidence>
<evidence type="ECO:0000269" key="11">
    <source>
    </source>
</evidence>
<evidence type="ECO:0000269" key="12">
    <source>
    </source>
</evidence>
<evidence type="ECO:0000303" key="13">
    <source>
    </source>
</evidence>
<evidence type="ECO:0000303" key="14">
    <source>
    </source>
</evidence>
<evidence type="ECO:0000305" key="15"/>
<feature type="chain" id="PRO_0000225686" description="Tectonic-like complex member MKS1">
    <location>
        <begin position="1"/>
        <end position="559"/>
    </location>
</feature>
<feature type="domain" description="C2 B9-type" evidence="2">
    <location>
        <begin position="311"/>
        <end position="439"/>
    </location>
</feature>
<feature type="splice variant" id="VSP_046063" description="In isoform 3." evidence="13">
    <original>MAETVWSTDTGEAVYRSRDPVRNLRL</original>
    <variation>MAVPVSSFAQRTRSRF</variation>
    <location>
        <begin position="1"/>
        <end position="26"/>
    </location>
</feature>
<feature type="splice variant" id="VSP_017414" description="In isoform 2." evidence="14">
    <original>ERLSRFGLRTETTGTVTFRLHCLQQSRAFMESSSLQKRMRSVLDRLEGFSQQSSIHNVLEAFRRARRRMQEARESLPQDLVSPSGTLVS</original>
    <variation>LSSSKTKEGRKVDGERVLNPQPVSLSLFPGKPHSTAWGLLRLRYELFLSK</variation>
    <location>
        <begin position="471"/>
        <end position="559"/>
    </location>
</feature>
<feature type="sequence variant" id="VAR_077515" description="In MKS1; no rescue of ciliation defects in an MKS1-knockdown cell line; dbSNP:rs863225205." evidence="10">
    <original>D</original>
    <variation>Y</variation>
    <location>
        <position position="19"/>
    </location>
</feature>
<feature type="sequence variant" id="VAR_060161" description="In dbSNP:rs11653070.">
    <original>L</original>
    <variation>F</variation>
    <location>
        <position position="39"/>
    </location>
</feature>
<feature type="sequence variant" id="VAR_077516" description="Found in a patient with Joubert syndrome also carrying a deletion in MKS1 intron 15 and a missense mutation in TCTN3 gene 'P-95'; uncertain significance; dbSNP:rs1114167302." evidence="12">
    <original>W</original>
    <variation>C</variation>
    <location>
        <position position="80"/>
    </location>
</feature>
<feature type="sequence variant" id="VAR_062287" description="In dbSNP:rs202112856." evidence="5">
    <original>R</original>
    <variation>Q</variation>
    <location>
        <position position="123"/>
    </location>
</feature>
<feature type="sequence variant" id="VAR_062288" description="In MKS1; uncertain significance; dbSNP:rs201845154." evidence="6">
    <original>R</original>
    <variation>W</variation>
    <location>
        <position position="166"/>
    </location>
</feature>
<feature type="sequence variant" id="VAR_062289" description="In dbSNP:rs151023718." evidence="5">
    <original>D</original>
    <variation>G</variation>
    <location>
        <position position="286"/>
    </location>
</feature>
<feature type="sequence variant" id="VAR_077517" description="In MKS1; uncertain significance; no defect of primary cilia formation in starved fibroblasts from a patient also carrying a deletion of S-372; no effect on the localization to the transition zone; dbSNP:rs863225208." evidence="10">
    <original>G</original>
    <variation>E</variation>
    <location>
        <position position="317"/>
    </location>
</feature>
<feature type="sequence variant" id="VAR_076978" description="In JBTS28." evidence="9">
    <location>
        <position position="362"/>
    </location>
</feature>
<feature type="sequence variant" id="VAR_062290" description="In BBS13." evidence="5">
    <location>
        <position position="371"/>
    </location>
</feature>
<feature type="sequence variant" id="VAR_077518" description="In MKS1; uncertain significance; no defect of primary cilia formation in starved fibroblasts from a patient also carrying E-317; no effect on the localization to the transition zone." evidence="10">
    <location>
        <position position="372"/>
    </location>
</feature>
<feature type="sequence variant" id="VAR_077519" description="In MKS1; uncertain significance; decreased primary cilia formation in starved fibroblasts from a patient also carrying a mutation potentially affecting splicing; complete rescue of ciliation defects in an MKS1-knockdown cell line; no effect on the localization to the transition zone; dbSNP:rs773684291." evidence="10">
    <original>S</original>
    <variation>L</variation>
    <location>
        <position position="403"/>
    </location>
</feature>
<feature type="sequence variant" id="VAR_077520" description="In MKS1; uncertain significance; no effect on primary cilia formation in starved fibroblasts from a patient also carrying a mutation creating a frameshift and a premature stop codon; partial rescue of ciliation defects in an MKS1-knockdown cell line; no effect on the localization to the transition zone; dbSNP:rs863225210." evidence="10">
    <original>P</original>
    <variation>S</variation>
    <location>
        <position position="421"/>
    </location>
</feature>
<feature type="sequence variant" id="VAR_062291" description="In dbSNP:rs200865108." evidence="5">
    <original>I</original>
    <variation>T</variation>
    <location>
        <position position="450"/>
    </location>
</feature>
<feature type="sequence variant" id="VAR_062292" description="In BBS13; dbSNP:rs137853105." evidence="5">
    <original>C</original>
    <variation>W</variation>
    <location>
        <position position="492"/>
    </location>
</feature>
<comment type="function">
    <text evidence="4 7 10">Component of the tectonic-like complex, a complex localized at the transition zone of primary cilia and acting as a barrier that prevents diffusion of transmembrane proteins between the cilia and plasma membranes. Involved in centrosome migration to the apical cell surface during early ciliogenesis. Required for ciliary structure and function, including a role in regulating length and appropriate number through modulating centrosome duplication. Required for cell branching morphology.</text>
</comment>
<comment type="subunit">
    <text evidence="1 4 8 11">Part of the tectonic-like complex (also named B9 complex) (PubMed:26595381). Interacts with TMEM107 (PubMed:26595381). Interacts with TCTN3, AHI1, TCTN1, TCTN2, CC2D2A (By similarity). Interacts with FLNA (PubMed:22121117). Interacts with TMEM67 (PubMed:17185389). Interacts with B9D1 and B9D2 (By similarity).</text>
</comment>
<comment type="interaction">
    <interactant intactId="EBI-719269">
        <id>Q9NXB0</id>
    </interactant>
    <interactant intactId="EBI-6958971">
        <id>Q9BPU9</id>
        <label>B9D2</label>
    </interactant>
    <organismsDiffer>false</organismsDiffer>
    <experiments>11</experiments>
</comment>
<comment type="interaction">
    <interactant intactId="EBI-719269">
        <id>Q9NXB0</id>
    </interactant>
    <interactant intactId="EBI-12845616">
        <id>Q6UX40</id>
        <label>TMEM107</label>
    </interactant>
    <organismsDiffer>false</organismsDiffer>
    <experiments>2</experiments>
</comment>
<comment type="subcellular location">
    <subcellularLocation>
        <location>Cytoplasm</location>
        <location>Cytoskeleton</location>
        <location>Cilium basal body</location>
    </subcellularLocation>
    <subcellularLocation>
        <location>Cytoplasm</location>
        <location>Cytoskeleton</location>
        <location>Microtubule organizing center</location>
        <location>Centrosome</location>
    </subcellularLocation>
    <text evidence="10">Localizes at the transition zone, a region between the basal body and the ciliary axoneme.</text>
</comment>
<comment type="alternative products">
    <event type="alternative splicing"/>
    <isoform>
        <id>Q9NXB0-1</id>
        <name>1</name>
        <sequence type="displayed"/>
    </isoform>
    <isoform>
        <id>Q9NXB0-2</id>
        <name>2</name>
        <sequence type="described" ref="VSP_017414"/>
    </isoform>
    <isoform>
        <id>Q9NXB0-3</id>
        <name>3</name>
        <sequence type="described" ref="VSP_046063"/>
    </isoform>
</comment>
<comment type="disease" evidence="3 6 10">
    <disease id="DI-00700">
        <name>Meckel syndrome 1</name>
        <acronym>MKS1</acronym>
        <description>A disorder characterized by a combination of renal cysts and variably associated features including developmental anomalies of the central nervous system (typically encephalocele), hepatic ductal dysplasia and cysts, and polydactyly.</description>
        <dbReference type="MIM" id="249000"/>
    </disease>
    <text>The disease is caused by variants affecting the gene represented in this entry.</text>
</comment>
<comment type="disease" evidence="5">
    <disease id="DI-03087">
        <name>Bardet-Biedl syndrome 13</name>
        <acronym>BBS13</acronym>
        <description>A syndrome characterized by usually severe pigmentary retinopathy, early-onset obesity, polydactyly, hypogenitalism, renal malformation and intellectual disability. Secondary features include diabetes mellitus, hypertension and congenital heart disease. Bardet-Biedl syndrome inheritance is autosomal recessive, but three mutated alleles (two at one locus, and a third at a second locus) may be required for clinical manifestation of some forms of the disease.</description>
        <dbReference type="MIM" id="615990"/>
    </disease>
    <text>The disease is caused by variants affecting the gene represented in this entry.</text>
</comment>
<comment type="disease" evidence="9">
    <disease id="DI-04820">
        <name>Joubert syndrome 28</name>
        <acronym>JBTS28</acronym>
        <description>A form of Joubert syndrome, a disorder presenting with cerebellar ataxia, oculomotor apraxia, hypotonia, neonatal breathing abnormalities and psychomotor delay. Neuroradiologically, it is characterized by cerebellar vermian hypoplasia/aplasia, thickened and reoriented superior cerebellar peduncles, and an abnormally large interpeduncular fossa, giving the appearance of a molar tooth on transaxial slices (molar tooth sign). Additional variable features include retinal dystrophy, renal disease, liver fibrosis, and polydactyly. JBTS28 inheritance is autosomal recessive.</description>
        <dbReference type="MIM" id="617121"/>
    </disease>
    <text>The disease is caused by variants affecting the gene represented in this entry.</text>
</comment>
<comment type="sequence caution" evidence="15">
    <conflict type="erroneous initiation">
        <sequence resource="EMBL-CDS" id="AAH10061"/>
    </conflict>
    <text>Truncated N-terminus.</text>
</comment>
<comment type="sequence caution" evidence="15">
    <conflict type="erroneous initiation">
        <sequence resource="EMBL-CDS" id="BAA91105"/>
    </conflict>
    <text>Truncated N-terminus.</text>
</comment>
<accession>Q9NXB0</accession>
<accession>B7WNX4</accession>
<accession>F5H885</accession>
<accession>Q284T0</accession>
<accession>Q96G13</accession>
<gene>
    <name type="primary">MKS1</name>
</gene>
<reference key="1">
    <citation type="journal article" date="2006" name="Nat. Genet.">
        <title>MKS1, encoding a component of the flagellar apparatus basal body proteome, is mutated in Meckel syndrome.</title>
        <authorList>
            <person name="Kyttaelae M."/>
            <person name="Tallila J."/>
            <person name="Salonen R."/>
            <person name="Kopra O."/>
            <person name="Kohlschmidt N."/>
            <person name="Paavola-Sakki P."/>
            <person name="Peltonen L."/>
            <person name="Kestilae M."/>
        </authorList>
    </citation>
    <scope>NUCLEOTIDE SEQUENCE [MRNA] (ISOFORM 1)</scope>
    <scope>INVOLVEMENT IN MKS1</scope>
</reference>
<reference key="2">
    <citation type="journal article" date="2004" name="Nat. Genet.">
        <title>Complete sequencing and characterization of 21,243 full-length human cDNAs.</title>
        <authorList>
            <person name="Ota T."/>
            <person name="Suzuki Y."/>
            <person name="Nishikawa T."/>
            <person name="Otsuki T."/>
            <person name="Sugiyama T."/>
            <person name="Irie R."/>
            <person name="Wakamatsu A."/>
            <person name="Hayashi K."/>
            <person name="Sato H."/>
            <person name="Nagai K."/>
            <person name="Kimura K."/>
            <person name="Makita H."/>
            <person name="Sekine M."/>
            <person name="Obayashi M."/>
            <person name="Nishi T."/>
            <person name="Shibahara T."/>
            <person name="Tanaka T."/>
            <person name="Ishii S."/>
            <person name="Yamamoto J."/>
            <person name="Saito K."/>
            <person name="Kawai Y."/>
            <person name="Isono Y."/>
            <person name="Nakamura Y."/>
            <person name="Nagahari K."/>
            <person name="Murakami K."/>
            <person name="Yasuda T."/>
            <person name="Iwayanagi T."/>
            <person name="Wagatsuma M."/>
            <person name="Shiratori A."/>
            <person name="Sudo H."/>
            <person name="Hosoiri T."/>
            <person name="Kaku Y."/>
            <person name="Kodaira H."/>
            <person name="Kondo H."/>
            <person name="Sugawara M."/>
            <person name="Takahashi M."/>
            <person name="Kanda K."/>
            <person name="Yokoi T."/>
            <person name="Furuya T."/>
            <person name="Kikkawa E."/>
            <person name="Omura Y."/>
            <person name="Abe K."/>
            <person name="Kamihara K."/>
            <person name="Katsuta N."/>
            <person name="Sato K."/>
            <person name="Tanikawa M."/>
            <person name="Yamazaki M."/>
            <person name="Ninomiya K."/>
            <person name="Ishibashi T."/>
            <person name="Yamashita H."/>
            <person name="Murakawa K."/>
            <person name="Fujimori K."/>
            <person name="Tanai H."/>
            <person name="Kimata M."/>
            <person name="Watanabe M."/>
            <person name="Hiraoka S."/>
            <person name="Chiba Y."/>
            <person name="Ishida S."/>
            <person name="Ono Y."/>
            <person name="Takiguchi S."/>
            <person name="Watanabe S."/>
            <person name="Yosida M."/>
            <person name="Hotuta T."/>
            <person name="Kusano J."/>
            <person name="Kanehori K."/>
            <person name="Takahashi-Fujii A."/>
            <person name="Hara H."/>
            <person name="Tanase T.-O."/>
            <person name="Nomura Y."/>
            <person name="Togiya S."/>
            <person name="Komai F."/>
            <person name="Hara R."/>
            <person name="Takeuchi K."/>
            <person name="Arita M."/>
            <person name="Imose N."/>
            <person name="Musashino K."/>
            <person name="Yuuki H."/>
            <person name="Oshima A."/>
            <person name="Sasaki N."/>
            <person name="Aotsuka S."/>
            <person name="Yoshikawa Y."/>
            <person name="Matsunawa H."/>
            <person name="Ichihara T."/>
            <person name="Shiohata N."/>
            <person name="Sano S."/>
            <person name="Moriya S."/>
            <person name="Momiyama H."/>
            <person name="Satoh N."/>
            <person name="Takami S."/>
            <person name="Terashima Y."/>
            <person name="Suzuki O."/>
            <person name="Nakagawa S."/>
            <person name="Senoh A."/>
            <person name="Mizoguchi H."/>
            <person name="Goto Y."/>
            <person name="Shimizu F."/>
            <person name="Wakebe H."/>
            <person name="Hishigaki H."/>
            <person name="Watanabe T."/>
            <person name="Sugiyama A."/>
            <person name="Takemoto M."/>
            <person name="Kawakami B."/>
            <person name="Yamazaki M."/>
            <person name="Watanabe K."/>
            <person name="Kumagai A."/>
            <person name="Itakura S."/>
            <person name="Fukuzumi Y."/>
            <person name="Fujimori Y."/>
            <person name="Komiyama M."/>
            <person name="Tashiro H."/>
            <person name="Tanigami A."/>
            <person name="Fujiwara T."/>
            <person name="Ono T."/>
            <person name="Yamada K."/>
            <person name="Fujii Y."/>
            <person name="Ozaki K."/>
            <person name="Hirao M."/>
            <person name="Ohmori Y."/>
            <person name="Kawabata A."/>
            <person name="Hikiji T."/>
            <person name="Kobatake N."/>
            <person name="Inagaki H."/>
            <person name="Ikema Y."/>
            <person name="Okamoto S."/>
            <person name="Okitani R."/>
            <person name="Kawakami T."/>
            <person name="Noguchi S."/>
            <person name="Itoh T."/>
            <person name="Shigeta K."/>
            <person name="Senba T."/>
            <person name="Matsumura K."/>
            <person name="Nakajima Y."/>
            <person name="Mizuno T."/>
            <person name="Morinaga M."/>
            <person name="Sasaki M."/>
            <person name="Togashi T."/>
            <person name="Oyama M."/>
            <person name="Hata H."/>
            <person name="Watanabe M."/>
            <person name="Komatsu T."/>
            <person name="Mizushima-Sugano J."/>
            <person name="Satoh T."/>
            <person name="Shirai Y."/>
            <person name="Takahashi Y."/>
            <person name="Nakagawa K."/>
            <person name="Okumura K."/>
            <person name="Nagase T."/>
            <person name="Nomura N."/>
            <person name="Kikuchi H."/>
            <person name="Masuho Y."/>
            <person name="Yamashita R."/>
            <person name="Nakai K."/>
            <person name="Yada T."/>
            <person name="Nakamura Y."/>
            <person name="Ohara O."/>
            <person name="Isogai T."/>
            <person name="Sugano S."/>
        </authorList>
    </citation>
    <scope>NUCLEOTIDE SEQUENCE [LARGE SCALE MRNA] (ISOFORM 3)</scope>
    <scope>NUCLEOTIDE SEQUENCE [LARGE SCALE MRNA] OF 86-559 (ISOFORM 1)</scope>
    <source>
        <tissue>Hepatoma</tissue>
        <tissue>Trachea</tissue>
    </source>
</reference>
<reference key="3">
    <citation type="journal article" date="2006" name="Nature">
        <title>DNA sequence of human chromosome 17 and analysis of rearrangement in the human lineage.</title>
        <authorList>
            <person name="Zody M.C."/>
            <person name="Garber M."/>
            <person name="Adams D.J."/>
            <person name="Sharpe T."/>
            <person name="Harrow J."/>
            <person name="Lupski J.R."/>
            <person name="Nicholson C."/>
            <person name="Searle S.M."/>
            <person name="Wilming L."/>
            <person name="Young S.K."/>
            <person name="Abouelleil A."/>
            <person name="Allen N.R."/>
            <person name="Bi W."/>
            <person name="Bloom T."/>
            <person name="Borowsky M.L."/>
            <person name="Bugalter B.E."/>
            <person name="Butler J."/>
            <person name="Chang J.L."/>
            <person name="Chen C.-K."/>
            <person name="Cook A."/>
            <person name="Corum B."/>
            <person name="Cuomo C.A."/>
            <person name="de Jong P.J."/>
            <person name="DeCaprio D."/>
            <person name="Dewar K."/>
            <person name="FitzGerald M."/>
            <person name="Gilbert J."/>
            <person name="Gibson R."/>
            <person name="Gnerre S."/>
            <person name="Goldstein S."/>
            <person name="Grafham D.V."/>
            <person name="Grocock R."/>
            <person name="Hafez N."/>
            <person name="Hagopian D.S."/>
            <person name="Hart E."/>
            <person name="Norman C.H."/>
            <person name="Humphray S."/>
            <person name="Jaffe D.B."/>
            <person name="Jones M."/>
            <person name="Kamal M."/>
            <person name="Khodiyar V.K."/>
            <person name="LaButti K."/>
            <person name="Laird G."/>
            <person name="Lehoczky J."/>
            <person name="Liu X."/>
            <person name="Lokyitsang T."/>
            <person name="Loveland J."/>
            <person name="Lui A."/>
            <person name="Macdonald P."/>
            <person name="Major J.E."/>
            <person name="Matthews L."/>
            <person name="Mauceli E."/>
            <person name="McCarroll S.A."/>
            <person name="Mihalev A.H."/>
            <person name="Mudge J."/>
            <person name="Nguyen C."/>
            <person name="Nicol R."/>
            <person name="O'Leary S.B."/>
            <person name="Osoegawa K."/>
            <person name="Schwartz D.C."/>
            <person name="Shaw-Smith C."/>
            <person name="Stankiewicz P."/>
            <person name="Steward C."/>
            <person name="Swarbreck D."/>
            <person name="Venkataraman V."/>
            <person name="Whittaker C.A."/>
            <person name="Yang X."/>
            <person name="Zimmer A.R."/>
            <person name="Bradley A."/>
            <person name="Hubbard T."/>
            <person name="Birren B.W."/>
            <person name="Rogers J."/>
            <person name="Lander E.S."/>
            <person name="Nusbaum C."/>
        </authorList>
    </citation>
    <scope>NUCLEOTIDE SEQUENCE [LARGE SCALE GENOMIC DNA]</scope>
</reference>
<reference key="4">
    <citation type="journal article" date="2004" name="Genome Res.">
        <title>The status, quality, and expansion of the NIH full-length cDNA project: the Mammalian Gene Collection (MGC).</title>
        <authorList>
            <consortium name="The MGC Project Team"/>
        </authorList>
    </citation>
    <scope>NUCLEOTIDE SEQUENCE [LARGE SCALE MRNA] (ISOFORM 2)</scope>
    <source>
        <tissue>Ovary</tissue>
    </source>
</reference>
<reference key="5">
    <citation type="submission" date="2004-06" db="EMBL/GenBank/DDBJ databases">
        <title>Cloning of human full open reading frames in Gateway(TM) system entry vector (pDONR201).</title>
        <authorList>
            <person name="Ebert L."/>
            <person name="Schick M."/>
            <person name="Neubert P."/>
            <person name="Schatten R."/>
            <person name="Henze S."/>
            <person name="Korn B."/>
        </authorList>
    </citation>
    <scope>NUCLEOTIDE SEQUENCE [LARGE SCALE MRNA] OF 144-559 (ISOFORM 1)</scope>
</reference>
<reference key="6">
    <citation type="journal article" date="2007" name="Hum. Mol. Genet.">
        <title>The Meckel-Gruber syndrome proteins MKS1 and meckelin interact and are required for primary cilium formation.</title>
        <authorList>
            <person name="Dawe H.R."/>
            <person name="Smith U.M."/>
            <person name="Cullinane A.R."/>
            <person name="Gerrelli D."/>
            <person name="Cox P."/>
            <person name="Badano J.L."/>
            <person name="Blair-Reid S."/>
            <person name="Sriram N."/>
            <person name="Katsanis N."/>
            <person name="Attie-Bitach T."/>
            <person name="Afford S.C."/>
            <person name="Copp A.J."/>
            <person name="Kelly D.A."/>
            <person name="Gull K."/>
            <person name="Johnson C.A."/>
        </authorList>
    </citation>
    <scope>SUBCELLULAR LOCATION</scope>
    <scope>FUNCTION</scope>
    <scope>INTERACTION WITH TMEM67</scope>
</reference>
<reference key="7">
    <citation type="journal article" date="2009" name="Hum. Mol. Genet.">
        <title>Ciliary and centrosomal defects associated with mutation and depletion of the Meckel syndrome genes MKS1 and MKS3.</title>
        <authorList>
            <person name="Tammachote R."/>
            <person name="Hommerding C.J."/>
            <person name="Sinders R.M."/>
            <person name="Miller C.A."/>
            <person name="Czarnecki P.G."/>
            <person name="Leightner A.C."/>
            <person name="Salisbury J.L."/>
            <person name="Ward C.J."/>
            <person name="Torres V.E."/>
            <person name="Gattone V.H. II"/>
            <person name="Harris P.C."/>
        </authorList>
    </citation>
    <scope>FUNCTION</scope>
</reference>
<reference key="8">
    <citation type="journal article" date="2009" name="J. Cell Sci.">
        <title>Functional interactions between the ciliopathy-associated Meckel syndrome 1 (MKS1) protein and two novel MKS1-related (MKSR) proteins.</title>
        <authorList>
            <person name="Bialas N.J."/>
            <person name="Inglis P.N."/>
            <person name="Li C."/>
            <person name="Robinson J.F."/>
            <person name="Parker J.D."/>
            <person name="Healey M.P."/>
            <person name="Davis E.E."/>
            <person name="Inglis C.D."/>
            <person name="Toivonen T."/>
            <person name="Cottell D.C."/>
            <person name="Blacque O.E."/>
            <person name="Quarmby L.M."/>
            <person name="Katsanis N."/>
            <person name="Leroux M.R."/>
        </authorList>
    </citation>
    <scope>SUBCELLULAR LOCATION</scope>
</reference>
<reference key="9">
    <citation type="journal article" date="2012" name="Hum. Mol. Genet.">
        <title>A meckelin-filamin A interaction mediates ciliogenesis.</title>
        <authorList>
            <person name="Adams M."/>
            <person name="Simms R.J."/>
            <person name="Abdelhamed Z."/>
            <person name="Dawe H.R."/>
            <person name="Szymanska K."/>
            <person name="Logan C.V."/>
            <person name="Wheway G."/>
            <person name="Pitt E."/>
            <person name="Gull K."/>
            <person name="Knowles M.A."/>
            <person name="Blair E."/>
            <person name="Cross S.H."/>
            <person name="Sayer J.A."/>
            <person name="Johnson C.A."/>
        </authorList>
    </citation>
    <scope>INTERACTION WITH FLNA</scope>
</reference>
<reference key="10">
    <citation type="journal article" date="2013" name="J. Proteome Res.">
        <title>Toward a comprehensive characterization of a human cancer cell phosphoproteome.</title>
        <authorList>
            <person name="Zhou H."/>
            <person name="Di Palma S."/>
            <person name="Preisinger C."/>
            <person name="Peng M."/>
            <person name="Polat A.N."/>
            <person name="Heck A.J."/>
            <person name="Mohammed S."/>
        </authorList>
    </citation>
    <scope>IDENTIFICATION BY MASS SPECTROMETRY [LARGE SCALE ANALYSIS]</scope>
    <source>
        <tissue>Erythroleukemia</tissue>
    </source>
</reference>
<reference key="11">
    <citation type="journal article" date="2016" name="Nat. Cell Biol.">
        <title>TMEM107 recruits ciliopathy proteins to subdomains of the ciliary transition zone and causes Joubert syndrome.</title>
        <authorList>
            <person name="Lambacher N.J."/>
            <person name="Bruel A.L."/>
            <person name="van Dam T.J."/>
            <person name="Szymanska K."/>
            <person name="Slaats G.G."/>
            <person name="Kuhns S."/>
            <person name="McManus G.J."/>
            <person name="Kennedy J.E."/>
            <person name="Gaff K."/>
            <person name="Wu K.M."/>
            <person name="van der Lee R."/>
            <person name="Burglen L."/>
            <person name="Doummar D."/>
            <person name="Riviere J.B."/>
            <person name="Faivre L."/>
            <person name="Attie-Bitach T."/>
            <person name="Saunier S."/>
            <person name="Curd A."/>
            <person name="Peckham M."/>
            <person name="Giles R.H."/>
            <person name="Johnson C.A."/>
            <person name="Huynen M.A."/>
            <person name="Thauvin-Robinet C."/>
            <person name="Blacque O.E."/>
        </authorList>
    </citation>
    <scope>IDENTIFICATION IN THE TECTONIC-LIKE COMPLEX</scope>
    <scope>INTERACTION WITH TMEM107</scope>
</reference>
<reference key="12">
    <citation type="journal article" date="2008" name="Nat. Genet.">
        <title>Hypomorphic mutations in syndromic encephalocele genes are associated with Bardet-Biedl syndrome.</title>
        <authorList>
            <person name="Leitch C.C."/>
            <person name="Zaghloul N.A."/>
            <person name="Davis E.E."/>
            <person name="Stoetzel C."/>
            <person name="Diaz-Font A."/>
            <person name="Rix S."/>
            <person name="Alfadhel M."/>
            <person name="Lewis R.A."/>
            <person name="Eyaid W."/>
            <person name="Banin E."/>
            <person name="Dollfus H."/>
            <person name="Beales P.L."/>
            <person name="Badano J.L."/>
            <person name="Katsanis N."/>
        </authorList>
    </citation>
    <scope>VARIANTS BBS13 PHE-371 DEL AND TRP-492</scope>
    <scope>VARIANTS GLN-123; GLY-286 AND THR-450</scope>
</reference>
<reference key="13">
    <citation type="journal article" date="2008" name="Nat. Genet.">
        <authorList>
            <person name="Leitch C.C."/>
            <person name="Zaghloul N.A."/>
            <person name="Davis E.E."/>
            <person name="Stoetzel C."/>
            <person name="Diaz-Font A."/>
            <person name="Rix S."/>
            <person name="Alfadhel M."/>
            <person name="Lewis R.A."/>
            <person name="Eyaid W."/>
            <person name="Banin E."/>
            <person name="Dollfus H."/>
            <person name="Beales P.L."/>
            <person name="Badano J.L."/>
            <person name="Katsanis N."/>
        </authorList>
    </citation>
    <scope>ERRATUM OF PUBMED:18327255</scope>
</reference>
<reference key="14">
    <citation type="journal article" date="2009" name="Hum. Mutat.">
        <title>Mutation spectrum of Meckel syndrome genes: one group of syndromes or several distinct groups?</title>
        <authorList>
            <person name="Tallila J."/>
            <person name="Salonen R."/>
            <person name="Kohlschmidt N."/>
            <person name="Peltonen L."/>
            <person name="Kestilae M."/>
        </authorList>
    </citation>
    <scope>VARIANT MKS1 TRP-166</scope>
</reference>
<reference key="15">
    <citation type="journal article" date="2014" name="Orphanet J. Rare Dis.">
        <title>Mutations in B9D1 and MKS1 cause mild Joubert syndrome: expanding the genetic overlap with the lethal ciliopathy Meckel syndrome.</title>
        <authorList>
            <person name="Romani M."/>
            <person name="Micalizzi A."/>
            <person name="Kraoua I."/>
            <person name="Dotti M.T."/>
            <person name="Cavallin M."/>
            <person name="Sztriha L."/>
            <person name="Ruta R."/>
            <person name="Mancini F."/>
            <person name="Mazza T."/>
            <person name="Castellana S."/>
            <person name="Hanene B."/>
            <person name="Carluccio M.A."/>
            <person name="Darra F."/>
            <person name="Mate A."/>
            <person name="Zimmermann A."/>
            <person name="Gouider-Khouja N."/>
            <person name="Valente E.M."/>
        </authorList>
    </citation>
    <scope>VARIANT JBTS28 SER-362 DEL</scope>
    <scope>INVOLVEMENT IN JBTS28</scope>
</reference>
<reference key="16">
    <citation type="journal article" date="2016" name="Eur. J. Med. Genet.">
        <title>MKS1 mutations cause Joubert syndrome with agenesis of the corpus callosum.</title>
        <authorList>
            <person name="Bader I."/>
            <person name="Decker E."/>
            <person name="Mayr J.A."/>
            <person name="Lunzer V."/>
            <person name="Koch J."/>
            <person name="Boltshauser E."/>
            <person name="Sperl W."/>
            <person name="Pietsch P."/>
            <person name="Ertl-Wagner B."/>
            <person name="Bolz H."/>
            <person name="Bergmann C."/>
            <person name="Rittinger O."/>
        </authorList>
    </citation>
    <scope>VARIANT CYS-80</scope>
</reference>
<reference key="17">
    <citation type="journal article" date="2016" name="J. Med. Genet.">
        <title>MKS1 regulates ciliary INPP5E levels in Joubert syndrome.</title>
        <authorList>
            <person name="Slaats G.G."/>
            <person name="Isabella C.R."/>
            <person name="Kroes H.Y."/>
            <person name="Dempsey J.C."/>
            <person name="Gremmels H."/>
            <person name="Monroe G.R."/>
            <person name="Phelps I.G."/>
            <person name="Duran K.J."/>
            <person name="Adkins J."/>
            <person name="Kumar S.A."/>
            <person name="Knutzen D.M."/>
            <person name="Knoers N.V."/>
            <person name="Mendelsohn N.J."/>
            <person name="Neubauer D."/>
            <person name="Mastroyianni S.D."/>
            <person name="Vogt J."/>
            <person name="Worgan L."/>
            <person name="Karp N."/>
            <person name="Bowdin S."/>
            <person name="Glass I.A."/>
            <person name="Parisi M.A."/>
            <person name="Otto E.A."/>
            <person name="Johnson C.A."/>
            <person name="Hildebrandt F."/>
            <person name="van Haaften G."/>
            <person name="Giles R.H."/>
            <person name="Doherty D."/>
        </authorList>
    </citation>
    <scope>VARIANTS MKS1 TYR-19; GLU-317; SER-372 DEL; LEU-403 AND SER-421</scope>
    <scope>CHARACTERIZATION OF VARIANTS MKS1 TYR-19; GLU-317; SER-372 DEL; LEU-403 AND SER-421</scope>
    <scope>FUNCTION</scope>
    <scope>SUBCELLULAR LOCATION</scope>
</reference>
<sequence>MAETVWSTDTGEAVYRSRDPVRNLRLRVHLQRITSSNFLHYQPAAELGKDLIDLATFRPQPTASGHRPEEDEEEEIVIGWQEKLFSQFEVDLYQNETACQSPLDYQYRQEILKLENSGGKKNRRIFTYTDSDRYTNLEEHCQRMTTAASEVPSFLVERMANVRRRRQDRRGMEGGILKSRIVTWEPSEEFVRNNHVINTPLQTMHIMADLGPYKKLGYKKYEHVLCTLKVDSNGVITVKPDFTGLKGPYRIETEGEKQELWKYTIDNVSPHAQPEEEERERRVFKDLYGRHKEYLSSLVGTDFEMTVPGALRLFVNGEVVSAQGYEYDNLYVHFFVELPTAHWSSPAFQQLSGVTQTCTTKSLAMDKVAHFSYPFTFEAFFLHEDESSDALPEWPVLYCEVLSLDFWQRYRVEGYGAVVLPATPGSHTLTVSTWRPVELGTVAELRRFFIGGSLELEDLSYVRIPGSFKGERLSRFGLRTETTGTVTFRLHCLQQSRAFMESSSLQKRMRSVLDRLEGFSQQSSIHNVLEAFRRARRRMQEARESLPQDLVSPSGTLVS</sequence>